<gene>
    <name type="primary">lysS</name>
    <name type="ordered locus">BSU00820</name>
</gene>
<organism>
    <name type="scientific">Bacillus subtilis (strain 168)</name>
    <dbReference type="NCBI Taxonomy" id="224308"/>
    <lineage>
        <taxon>Bacteria</taxon>
        <taxon>Bacillati</taxon>
        <taxon>Bacillota</taxon>
        <taxon>Bacilli</taxon>
        <taxon>Bacillales</taxon>
        <taxon>Bacillaceae</taxon>
        <taxon>Bacillus</taxon>
    </lineage>
</organism>
<keyword id="KW-0030">Aminoacyl-tRNA synthetase</keyword>
<keyword id="KW-0067">ATP-binding</keyword>
<keyword id="KW-0963">Cytoplasm</keyword>
<keyword id="KW-0436">Ligase</keyword>
<keyword id="KW-0460">Magnesium</keyword>
<keyword id="KW-0479">Metal-binding</keyword>
<keyword id="KW-0547">Nucleotide-binding</keyword>
<keyword id="KW-0648">Protein biosynthesis</keyword>
<keyword id="KW-1185">Reference proteome</keyword>
<comment type="catalytic activity">
    <reaction>
        <text>tRNA(Lys) + L-lysine + ATP = L-lysyl-tRNA(Lys) + AMP + diphosphate</text>
        <dbReference type="Rhea" id="RHEA:20792"/>
        <dbReference type="Rhea" id="RHEA-COMP:9696"/>
        <dbReference type="Rhea" id="RHEA-COMP:9697"/>
        <dbReference type="ChEBI" id="CHEBI:30616"/>
        <dbReference type="ChEBI" id="CHEBI:32551"/>
        <dbReference type="ChEBI" id="CHEBI:33019"/>
        <dbReference type="ChEBI" id="CHEBI:78442"/>
        <dbReference type="ChEBI" id="CHEBI:78529"/>
        <dbReference type="ChEBI" id="CHEBI:456215"/>
        <dbReference type="EC" id="6.1.1.6"/>
    </reaction>
</comment>
<comment type="cofactor">
    <cofactor evidence="1">
        <name>Mg(2+)</name>
        <dbReference type="ChEBI" id="CHEBI:18420"/>
    </cofactor>
    <text evidence="1">Binds 3 Mg(2+) ions per subunit.</text>
</comment>
<comment type="subunit">
    <text evidence="1">Homodimer.</text>
</comment>
<comment type="subcellular location">
    <subcellularLocation>
        <location evidence="1">Cytoplasm</location>
    </subcellularLocation>
</comment>
<comment type="similarity">
    <text evidence="2">Belongs to the class-II aminoacyl-tRNA synthetase family.</text>
</comment>
<protein>
    <recommendedName>
        <fullName>Lysine--tRNA ligase</fullName>
        <ecNumber>6.1.1.6</ecNumber>
    </recommendedName>
    <alternativeName>
        <fullName>Lysyl-tRNA synthetase</fullName>
        <shortName>LysRS</shortName>
    </alternativeName>
</protein>
<feature type="chain" id="PRO_0000152600" description="Lysine--tRNA ligase">
    <location>
        <begin position="1"/>
        <end position="499"/>
    </location>
</feature>
<feature type="binding site" evidence="1">
    <location>
        <position position="410"/>
    </location>
    <ligand>
        <name>Mg(2+)</name>
        <dbReference type="ChEBI" id="CHEBI:18420"/>
        <label>1</label>
    </ligand>
</feature>
<feature type="binding site" evidence="1">
    <location>
        <position position="417"/>
    </location>
    <ligand>
        <name>Mg(2+)</name>
        <dbReference type="ChEBI" id="CHEBI:18420"/>
        <label>1</label>
    </ligand>
</feature>
<feature type="binding site" evidence="1">
    <location>
        <position position="417"/>
    </location>
    <ligand>
        <name>Mg(2+)</name>
        <dbReference type="ChEBI" id="CHEBI:18420"/>
        <label>2</label>
    </ligand>
</feature>
<accession>P37477</accession>
<sequence>MSQEEHNHEELNDQLQVRRDKMNQLRDNGIDPFGARFERTHQSQEVISAYQDLTKEELEEKAIEVTIAGRMMTKRGKGKAGFAHLQDLEGQIQIYVRKDSVGDDQYEIFKSSDLGDLIGVTGKVFKTNVGELSVKATSFELLTKALRPLPDKYHGLKDVEQRYRQRYLDLIVNPDSKHTFITRSKIIQAMRRYLDDHGYLEVETPTMHSIPGGASARPFITHHNALDIPLYMRIAIELHLKRLIVGGLEKVYEIGRVFRNEGVSTRHNPEFTMIELYEAYADYKDIMSLTENLVAHIAQEVLGTTTIQYGEEQIDLKPEWKRIHMVDAVKEATGVDFWEEVTVEQAREYAKEHEVEIKDSMTVGHIINEFFEQKIEETLIQPTFIYGHPVEISPLAKKNPEDPRFTDRFELFIVGREHANAFTELNDPIDQRERFEAQLKEREAGNDEAHLMDEDFVEALEYGMPPTGGLGIGIDRLVMLLTNAPSIRDVLLFPQMRQR</sequence>
<dbReference type="EC" id="6.1.1.6"/>
<dbReference type="EMBL" id="D26185">
    <property type="protein sequence ID" value="BAA05316.1"/>
    <property type="molecule type" value="Genomic_DNA"/>
</dbReference>
<dbReference type="EMBL" id="AL009126">
    <property type="protein sequence ID" value="CAB11858.1"/>
    <property type="molecule type" value="Genomic_DNA"/>
</dbReference>
<dbReference type="PIR" id="S66111">
    <property type="entry name" value="S66111"/>
</dbReference>
<dbReference type="RefSeq" id="NP_387963.1">
    <property type="nucleotide sequence ID" value="NC_000964.3"/>
</dbReference>
<dbReference type="RefSeq" id="WP_003242743.1">
    <property type="nucleotide sequence ID" value="NZ_OZ025638.1"/>
</dbReference>
<dbReference type="SMR" id="P37477"/>
<dbReference type="FunCoup" id="P37477">
    <property type="interactions" value="841"/>
</dbReference>
<dbReference type="IntAct" id="P37477">
    <property type="interactions" value="1"/>
</dbReference>
<dbReference type="MINT" id="P37477"/>
<dbReference type="STRING" id="224308.BSU00820"/>
<dbReference type="jPOST" id="P37477"/>
<dbReference type="PaxDb" id="224308-BSU00820"/>
<dbReference type="EnsemblBacteria" id="CAB11858">
    <property type="protein sequence ID" value="CAB11858"/>
    <property type="gene ID" value="BSU_00820"/>
</dbReference>
<dbReference type="GeneID" id="86875535"/>
<dbReference type="GeneID" id="936911"/>
<dbReference type="KEGG" id="bsu:BSU00820"/>
<dbReference type="PATRIC" id="fig|224308.179.peg.82"/>
<dbReference type="eggNOG" id="COG1190">
    <property type="taxonomic scope" value="Bacteria"/>
</dbReference>
<dbReference type="InParanoid" id="P37477"/>
<dbReference type="OrthoDB" id="9801152at2"/>
<dbReference type="PhylomeDB" id="P37477"/>
<dbReference type="BioCyc" id="BSUB:BSU00820-MONOMER"/>
<dbReference type="SABIO-RK" id="P37477"/>
<dbReference type="Proteomes" id="UP000001570">
    <property type="component" value="Chromosome"/>
</dbReference>
<dbReference type="GO" id="GO:0005737">
    <property type="term" value="C:cytoplasm"/>
    <property type="evidence" value="ECO:0000318"/>
    <property type="project" value="GO_Central"/>
</dbReference>
<dbReference type="GO" id="GO:0005829">
    <property type="term" value="C:cytosol"/>
    <property type="evidence" value="ECO:0000318"/>
    <property type="project" value="GO_Central"/>
</dbReference>
<dbReference type="GO" id="GO:0005524">
    <property type="term" value="F:ATP binding"/>
    <property type="evidence" value="ECO:0007669"/>
    <property type="project" value="UniProtKB-UniRule"/>
</dbReference>
<dbReference type="GO" id="GO:0140096">
    <property type="term" value="F:catalytic activity, acting on a protein"/>
    <property type="evidence" value="ECO:0007669"/>
    <property type="project" value="UniProtKB-ARBA"/>
</dbReference>
<dbReference type="GO" id="GO:0004824">
    <property type="term" value="F:lysine-tRNA ligase activity"/>
    <property type="evidence" value="ECO:0000318"/>
    <property type="project" value="GO_Central"/>
</dbReference>
<dbReference type="GO" id="GO:0000287">
    <property type="term" value="F:magnesium ion binding"/>
    <property type="evidence" value="ECO:0007669"/>
    <property type="project" value="UniProtKB-UniRule"/>
</dbReference>
<dbReference type="GO" id="GO:0016740">
    <property type="term" value="F:transferase activity"/>
    <property type="evidence" value="ECO:0007669"/>
    <property type="project" value="UniProtKB-ARBA"/>
</dbReference>
<dbReference type="GO" id="GO:0000049">
    <property type="term" value="F:tRNA binding"/>
    <property type="evidence" value="ECO:0000318"/>
    <property type="project" value="GO_Central"/>
</dbReference>
<dbReference type="GO" id="GO:0006430">
    <property type="term" value="P:lysyl-tRNA aminoacylation"/>
    <property type="evidence" value="ECO:0000318"/>
    <property type="project" value="GO_Central"/>
</dbReference>
<dbReference type="CDD" id="cd00775">
    <property type="entry name" value="LysRS_core"/>
    <property type="match status" value="1"/>
</dbReference>
<dbReference type="CDD" id="cd04322">
    <property type="entry name" value="LysRS_N"/>
    <property type="match status" value="1"/>
</dbReference>
<dbReference type="FunFam" id="2.40.50.140:FF:000024">
    <property type="entry name" value="Lysine--tRNA ligase"/>
    <property type="match status" value="1"/>
</dbReference>
<dbReference type="FunFam" id="3.30.930.10:FF:000001">
    <property type="entry name" value="Lysine--tRNA ligase"/>
    <property type="match status" value="1"/>
</dbReference>
<dbReference type="Gene3D" id="3.30.930.10">
    <property type="entry name" value="Bira Bifunctional Protein, Domain 2"/>
    <property type="match status" value="1"/>
</dbReference>
<dbReference type="Gene3D" id="2.40.50.140">
    <property type="entry name" value="Nucleic acid-binding proteins"/>
    <property type="match status" value="1"/>
</dbReference>
<dbReference type="HAMAP" id="MF_00252">
    <property type="entry name" value="Lys_tRNA_synth_class2"/>
    <property type="match status" value="1"/>
</dbReference>
<dbReference type="InterPro" id="IPR004364">
    <property type="entry name" value="Aa-tRNA-synt_II"/>
</dbReference>
<dbReference type="InterPro" id="IPR006195">
    <property type="entry name" value="aa-tRNA-synth_II"/>
</dbReference>
<dbReference type="InterPro" id="IPR045864">
    <property type="entry name" value="aa-tRNA-synth_II/BPL/LPL"/>
</dbReference>
<dbReference type="InterPro" id="IPR002313">
    <property type="entry name" value="Lys-tRNA-ligase_II"/>
</dbReference>
<dbReference type="InterPro" id="IPR034762">
    <property type="entry name" value="Lys-tRNA-ligase_II_bac/euk"/>
</dbReference>
<dbReference type="InterPro" id="IPR044136">
    <property type="entry name" value="Lys-tRNA-ligase_II_N"/>
</dbReference>
<dbReference type="InterPro" id="IPR018149">
    <property type="entry name" value="Lys-tRNA-synth_II_C"/>
</dbReference>
<dbReference type="InterPro" id="IPR012340">
    <property type="entry name" value="NA-bd_OB-fold"/>
</dbReference>
<dbReference type="InterPro" id="IPR004365">
    <property type="entry name" value="NA-bd_OB_tRNA"/>
</dbReference>
<dbReference type="NCBIfam" id="TIGR00499">
    <property type="entry name" value="lysS_bact"/>
    <property type="match status" value="1"/>
</dbReference>
<dbReference type="NCBIfam" id="NF001756">
    <property type="entry name" value="PRK00484.1"/>
    <property type="match status" value="1"/>
</dbReference>
<dbReference type="PANTHER" id="PTHR42918:SF15">
    <property type="entry name" value="LYSINE--TRNA LIGASE, CHLOROPLASTIC_MITOCHONDRIAL"/>
    <property type="match status" value="1"/>
</dbReference>
<dbReference type="PANTHER" id="PTHR42918">
    <property type="entry name" value="LYSYL-TRNA SYNTHETASE"/>
    <property type="match status" value="1"/>
</dbReference>
<dbReference type="Pfam" id="PF00152">
    <property type="entry name" value="tRNA-synt_2"/>
    <property type="match status" value="1"/>
</dbReference>
<dbReference type="Pfam" id="PF01336">
    <property type="entry name" value="tRNA_anti-codon"/>
    <property type="match status" value="1"/>
</dbReference>
<dbReference type="PIRSF" id="PIRSF039101">
    <property type="entry name" value="LysRS2"/>
    <property type="match status" value="1"/>
</dbReference>
<dbReference type="PRINTS" id="PR00982">
    <property type="entry name" value="TRNASYNTHLYS"/>
</dbReference>
<dbReference type="SUPFAM" id="SSF55681">
    <property type="entry name" value="Class II aaRS and biotin synthetases"/>
    <property type="match status" value="1"/>
</dbReference>
<dbReference type="SUPFAM" id="SSF50249">
    <property type="entry name" value="Nucleic acid-binding proteins"/>
    <property type="match status" value="1"/>
</dbReference>
<dbReference type="PROSITE" id="PS50862">
    <property type="entry name" value="AA_TRNA_LIGASE_II"/>
    <property type="match status" value="1"/>
</dbReference>
<name>SYK_BACSU</name>
<reference key="1">
    <citation type="journal article" date="1994" name="DNA Res.">
        <title>Systematic sequencing of the 180 kilobase region of the Bacillus subtilis chromosome containing the replication origin.</title>
        <authorList>
            <person name="Ogasawara N."/>
            <person name="Nakai S."/>
            <person name="Yoshikawa H."/>
        </authorList>
    </citation>
    <scope>NUCLEOTIDE SEQUENCE [GENOMIC DNA]</scope>
    <source>
        <strain>168</strain>
    </source>
</reference>
<reference key="2">
    <citation type="journal article" date="1997" name="Nature">
        <title>The complete genome sequence of the Gram-positive bacterium Bacillus subtilis.</title>
        <authorList>
            <person name="Kunst F."/>
            <person name="Ogasawara N."/>
            <person name="Moszer I."/>
            <person name="Albertini A.M."/>
            <person name="Alloni G."/>
            <person name="Azevedo V."/>
            <person name="Bertero M.G."/>
            <person name="Bessieres P."/>
            <person name="Bolotin A."/>
            <person name="Borchert S."/>
            <person name="Borriss R."/>
            <person name="Boursier L."/>
            <person name="Brans A."/>
            <person name="Braun M."/>
            <person name="Brignell S.C."/>
            <person name="Bron S."/>
            <person name="Brouillet S."/>
            <person name="Bruschi C.V."/>
            <person name="Caldwell B."/>
            <person name="Capuano V."/>
            <person name="Carter N.M."/>
            <person name="Choi S.-K."/>
            <person name="Codani J.-J."/>
            <person name="Connerton I.F."/>
            <person name="Cummings N.J."/>
            <person name="Daniel R.A."/>
            <person name="Denizot F."/>
            <person name="Devine K.M."/>
            <person name="Duesterhoeft A."/>
            <person name="Ehrlich S.D."/>
            <person name="Emmerson P.T."/>
            <person name="Entian K.-D."/>
            <person name="Errington J."/>
            <person name="Fabret C."/>
            <person name="Ferrari E."/>
            <person name="Foulger D."/>
            <person name="Fritz C."/>
            <person name="Fujita M."/>
            <person name="Fujita Y."/>
            <person name="Fuma S."/>
            <person name="Galizzi A."/>
            <person name="Galleron N."/>
            <person name="Ghim S.-Y."/>
            <person name="Glaser P."/>
            <person name="Goffeau A."/>
            <person name="Golightly E.J."/>
            <person name="Grandi G."/>
            <person name="Guiseppi G."/>
            <person name="Guy B.J."/>
            <person name="Haga K."/>
            <person name="Haiech J."/>
            <person name="Harwood C.R."/>
            <person name="Henaut A."/>
            <person name="Hilbert H."/>
            <person name="Holsappel S."/>
            <person name="Hosono S."/>
            <person name="Hullo M.-F."/>
            <person name="Itaya M."/>
            <person name="Jones L.-M."/>
            <person name="Joris B."/>
            <person name="Karamata D."/>
            <person name="Kasahara Y."/>
            <person name="Klaerr-Blanchard M."/>
            <person name="Klein C."/>
            <person name="Kobayashi Y."/>
            <person name="Koetter P."/>
            <person name="Koningstein G."/>
            <person name="Krogh S."/>
            <person name="Kumano M."/>
            <person name="Kurita K."/>
            <person name="Lapidus A."/>
            <person name="Lardinois S."/>
            <person name="Lauber J."/>
            <person name="Lazarevic V."/>
            <person name="Lee S.-M."/>
            <person name="Levine A."/>
            <person name="Liu H."/>
            <person name="Masuda S."/>
            <person name="Mauel C."/>
            <person name="Medigue C."/>
            <person name="Medina N."/>
            <person name="Mellado R.P."/>
            <person name="Mizuno M."/>
            <person name="Moestl D."/>
            <person name="Nakai S."/>
            <person name="Noback M."/>
            <person name="Noone D."/>
            <person name="O'Reilly M."/>
            <person name="Ogawa K."/>
            <person name="Ogiwara A."/>
            <person name="Oudega B."/>
            <person name="Park S.-H."/>
            <person name="Parro V."/>
            <person name="Pohl T.M."/>
            <person name="Portetelle D."/>
            <person name="Porwollik S."/>
            <person name="Prescott A.M."/>
            <person name="Presecan E."/>
            <person name="Pujic P."/>
            <person name="Purnelle B."/>
            <person name="Rapoport G."/>
            <person name="Rey M."/>
            <person name="Reynolds S."/>
            <person name="Rieger M."/>
            <person name="Rivolta C."/>
            <person name="Rocha E."/>
            <person name="Roche B."/>
            <person name="Rose M."/>
            <person name="Sadaie Y."/>
            <person name="Sato T."/>
            <person name="Scanlan E."/>
            <person name="Schleich S."/>
            <person name="Schroeter R."/>
            <person name="Scoffone F."/>
            <person name="Sekiguchi J."/>
            <person name="Sekowska A."/>
            <person name="Seror S.J."/>
            <person name="Serror P."/>
            <person name="Shin B.-S."/>
            <person name="Soldo B."/>
            <person name="Sorokin A."/>
            <person name="Tacconi E."/>
            <person name="Takagi T."/>
            <person name="Takahashi H."/>
            <person name="Takemaru K."/>
            <person name="Takeuchi M."/>
            <person name="Tamakoshi A."/>
            <person name="Tanaka T."/>
            <person name="Terpstra P."/>
            <person name="Tognoni A."/>
            <person name="Tosato V."/>
            <person name="Uchiyama S."/>
            <person name="Vandenbol M."/>
            <person name="Vannier F."/>
            <person name="Vassarotti A."/>
            <person name="Viari A."/>
            <person name="Wambutt R."/>
            <person name="Wedler E."/>
            <person name="Wedler H."/>
            <person name="Weitzenegger T."/>
            <person name="Winters P."/>
            <person name="Wipat A."/>
            <person name="Yamamoto H."/>
            <person name="Yamane K."/>
            <person name="Yasumoto K."/>
            <person name="Yata K."/>
            <person name="Yoshida K."/>
            <person name="Yoshikawa H.-F."/>
            <person name="Zumstein E."/>
            <person name="Yoshikawa H."/>
            <person name="Danchin A."/>
        </authorList>
    </citation>
    <scope>NUCLEOTIDE SEQUENCE [LARGE SCALE GENOMIC DNA]</scope>
    <source>
        <strain>168</strain>
    </source>
</reference>
<evidence type="ECO:0000250" key="1"/>
<evidence type="ECO:0000305" key="2"/>
<proteinExistence type="inferred from homology"/>